<dbReference type="EC" id="3.1.26.5" evidence="1"/>
<dbReference type="EMBL" id="AE004092">
    <property type="protein sequence ID" value="AAK33323.2"/>
    <property type="molecule type" value="Genomic_DNA"/>
</dbReference>
<dbReference type="EMBL" id="CP000017">
    <property type="protein sequence ID" value="AAZ50826.1"/>
    <property type="molecule type" value="Genomic_DNA"/>
</dbReference>
<dbReference type="RefSeq" id="NP_268602.2">
    <property type="nucleotide sequence ID" value="NC_002737.2"/>
</dbReference>
<dbReference type="SMR" id="Q9A1J4"/>
<dbReference type="PaxDb" id="1314-HKU360_00248"/>
<dbReference type="KEGG" id="spy:SPy_0246"/>
<dbReference type="KEGG" id="spz:M5005_Spy0207"/>
<dbReference type="PATRIC" id="fig|160490.10.peg.215"/>
<dbReference type="HOGENOM" id="CLU_117179_9_1_9"/>
<dbReference type="PHI-base" id="PHI:4503"/>
<dbReference type="Proteomes" id="UP000000750">
    <property type="component" value="Chromosome"/>
</dbReference>
<dbReference type="GO" id="GO:0030677">
    <property type="term" value="C:ribonuclease P complex"/>
    <property type="evidence" value="ECO:0007669"/>
    <property type="project" value="TreeGrafter"/>
</dbReference>
<dbReference type="GO" id="GO:0042781">
    <property type="term" value="F:3'-tRNA processing endoribonuclease activity"/>
    <property type="evidence" value="ECO:0007669"/>
    <property type="project" value="TreeGrafter"/>
</dbReference>
<dbReference type="GO" id="GO:0004526">
    <property type="term" value="F:ribonuclease P activity"/>
    <property type="evidence" value="ECO:0007669"/>
    <property type="project" value="UniProtKB-UniRule"/>
</dbReference>
<dbReference type="GO" id="GO:0000049">
    <property type="term" value="F:tRNA binding"/>
    <property type="evidence" value="ECO:0007669"/>
    <property type="project" value="UniProtKB-UniRule"/>
</dbReference>
<dbReference type="GO" id="GO:0001682">
    <property type="term" value="P:tRNA 5'-leader removal"/>
    <property type="evidence" value="ECO:0007669"/>
    <property type="project" value="UniProtKB-UniRule"/>
</dbReference>
<dbReference type="FunFam" id="3.30.230.10:FF:000021">
    <property type="entry name" value="Ribonuclease P protein component"/>
    <property type="match status" value="1"/>
</dbReference>
<dbReference type="Gene3D" id="3.30.230.10">
    <property type="match status" value="1"/>
</dbReference>
<dbReference type="HAMAP" id="MF_00227">
    <property type="entry name" value="RNase_P"/>
    <property type="match status" value="1"/>
</dbReference>
<dbReference type="InterPro" id="IPR020568">
    <property type="entry name" value="Ribosomal_Su5_D2-typ_SF"/>
</dbReference>
<dbReference type="InterPro" id="IPR014721">
    <property type="entry name" value="Ribsml_uS5_D2-typ_fold_subgr"/>
</dbReference>
<dbReference type="InterPro" id="IPR000100">
    <property type="entry name" value="RNase_P"/>
</dbReference>
<dbReference type="InterPro" id="IPR020539">
    <property type="entry name" value="RNase_P_CS"/>
</dbReference>
<dbReference type="NCBIfam" id="TIGR00188">
    <property type="entry name" value="rnpA"/>
    <property type="match status" value="1"/>
</dbReference>
<dbReference type="PANTHER" id="PTHR33992">
    <property type="entry name" value="RIBONUCLEASE P PROTEIN COMPONENT"/>
    <property type="match status" value="1"/>
</dbReference>
<dbReference type="PANTHER" id="PTHR33992:SF1">
    <property type="entry name" value="RIBONUCLEASE P PROTEIN COMPONENT"/>
    <property type="match status" value="1"/>
</dbReference>
<dbReference type="Pfam" id="PF00825">
    <property type="entry name" value="Ribonuclease_P"/>
    <property type="match status" value="1"/>
</dbReference>
<dbReference type="SUPFAM" id="SSF54211">
    <property type="entry name" value="Ribosomal protein S5 domain 2-like"/>
    <property type="match status" value="1"/>
</dbReference>
<dbReference type="PROSITE" id="PS00648">
    <property type="entry name" value="RIBONUCLEASE_P"/>
    <property type="match status" value="1"/>
</dbReference>
<feature type="chain" id="PRO_0000198542" description="Ribonuclease P protein component">
    <location>
        <begin position="1"/>
        <end position="119"/>
    </location>
</feature>
<gene>
    <name evidence="1" type="primary">rnpA</name>
    <name type="synonym">fasX</name>
    <name type="ordered locus">SPy_0246</name>
    <name type="ordered locus">M5005_Spy0207</name>
</gene>
<protein>
    <recommendedName>
        <fullName evidence="1">Ribonuclease P protein component</fullName>
        <shortName evidence="1">RNase P protein</shortName>
        <shortName evidence="1">RNaseP protein</shortName>
        <ecNumber evidence="1">3.1.26.5</ecNumber>
    </recommendedName>
    <alternativeName>
        <fullName evidence="1">Protein C5</fullName>
    </alternativeName>
</protein>
<name>RNPA_STRP1</name>
<accession>Q9A1J4</accession>
<accession>Q490Z2</accession>
<evidence type="ECO:0000255" key="1">
    <source>
        <dbReference type="HAMAP-Rule" id="MF_00227"/>
    </source>
</evidence>
<reference key="1">
    <citation type="journal article" date="2001" name="Proc. Natl. Acad. Sci. U.S.A.">
        <title>Complete genome sequence of an M1 strain of Streptococcus pyogenes.</title>
        <authorList>
            <person name="Ferretti J.J."/>
            <person name="McShan W.M."/>
            <person name="Ajdic D.J."/>
            <person name="Savic D.J."/>
            <person name="Savic G."/>
            <person name="Lyon K."/>
            <person name="Primeaux C."/>
            <person name="Sezate S."/>
            <person name="Suvorov A.N."/>
            <person name="Kenton S."/>
            <person name="Lai H.S."/>
            <person name="Lin S.P."/>
            <person name="Qian Y."/>
            <person name="Jia H.G."/>
            <person name="Najar F.Z."/>
            <person name="Ren Q."/>
            <person name="Zhu H."/>
            <person name="Song L."/>
            <person name="White J."/>
            <person name="Yuan X."/>
            <person name="Clifton S.W."/>
            <person name="Roe B.A."/>
            <person name="McLaughlin R.E."/>
        </authorList>
    </citation>
    <scope>NUCLEOTIDE SEQUENCE [LARGE SCALE GENOMIC DNA]</scope>
    <source>
        <strain>ATCC 700294 / SF370 / Serotype M1</strain>
    </source>
</reference>
<reference key="2">
    <citation type="submission" date="2014-04" db="EMBL/GenBank/DDBJ databases">
        <authorList>
            <person name="Beres S.B."/>
            <person name="Musser J.M."/>
        </authorList>
    </citation>
    <scope>SEQUENCE REVISION TO 88</scope>
</reference>
<reference key="3">
    <citation type="journal article" date="2005" name="J. Infect. Dis.">
        <title>Evolutionary origin and emergence of a highly successful clone of serotype M1 group A Streptococcus involved multiple horizontal gene transfer events.</title>
        <authorList>
            <person name="Sumby P."/>
            <person name="Porcella S.F."/>
            <person name="Madrigal A.G."/>
            <person name="Barbian K.D."/>
            <person name="Virtaneva K."/>
            <person name="Ricklefs S.M."/>
            <person name="Sturdevant D.E."/>
            <person name="Graham M.R."/>
            <person name="Vuopio-Varkila J."/>
            <person name="Hoe N.P."/>
            <person name="Musser J.M."/>
        </authorList>
    </citation>
    <scope>NUCLEOTIDE SEQUENCE [LARGE SCALE GENOMIC DNA]</scope>
    <source>
        <strain>ATCC BAA-947 / MGAS5005 / Serotype M1</strain>
    </source>
</reference>
<sequence length="119" mass="13866">MKKTYRVKREKDFQAIFKDGKSTANRKFVIYHLNRGQDHFRVGISVGKKIGNAVTRNAVKRKIRHVIMALGHQLKSEDFVVIARKGVESLEYQELQQNLHHVLKLAQLLEKGFESEEKH</sequence>
<organism>
    <name type="scientific">Streptococcus pyogenes serotype M1</name>
    <dbReference type="NCBI Taxonomy" id="301447"/>
    <lineage>
        <taxon>Bacteria</taxon>
        <taxon>Bacillati</taxon>
        <taxon>Bacillota</taxon>
        <taxon>Bacilli</taxon>
        <taxon>Lactobacillales</taxon>
        <taxon>Streptococcaceae</taxon>
        <taxon>Streptococcus</taxon>
    </lineage>
</organism>
<proteinExistence type="inferred from homology"/>
<keyword id="KW-0255">Endonuclease</keyword>
<keyword id="KW-0378">Hydrolase</keyword>
<keyword id="KW-0540">Nuclease</keyword>
<keyword id="KW-1185">Reference proteome</keyword>
<keyword id="KW-0694">RNA-binding</keyword>
<keyword id="KW-0819">tRNA processing</keyword>
<comment type="function">
    <text evidence="1">RNaseP catalyzes the removal of the 5'-leader sequence from pre-tRNA to produce the mature 5'-terminus. It can also cleave other RNA substrates such as 4.5S RNA. The protein component plays an auxiliary but essential role in vivo by binding to the 5'-leader sequence and broadening the substrate specificity of the ribozyme.</text>
</comment>
<comment type="catalytic activity">
    <reaction evidence="1">
        <text>Endonucleolytic cleavage of RNA, removing 5'-extranucleotides from tRNA precursor.</text>
        <dbReference type="EC" id="3.1.26.5"/>
    </reaction>
</comment>
<comment type="subunit">
    <text evidence="1">Consists of a catalytic RNA component (M1 or rnpB) and a protein subunit.</text>
</comment>
<comment type="similarity">
    <text evidence="1">Belongs to the RnpA family.</text>
</comment>